<proteinExistence type="evidence at protein level"/>
<protein>
    <recommendedName>
        <fullName>Dapper 1-A</fullName>
    </recommendedName>
    <alternativeName>
        <fullName>Dapper1b</fullName>
        <shortName>XDpr1b</shortName>
    </alternativeName>
    <alternativeName>
        <fullName>Functional regulator of dsh in ontogenesis</fullName>
        <shortName>Frodo</shortName>
    </alternativeName>
</protein>
<evidence type="ECO:0000250" key="1"/>
<evidence type="ECO:0000255" key="2"/>
<evidence type="ECO:0000256" key="3">
    <source>
        <dbReference type="SAM" id="MobiDB-lite"/>
    </source>
</evidence>
<evidence type="ECO:0000269" key="4">
    <source>
    </source>
</evidence>
<evidence type="ECO:0000269" key="5">
    <source>
    </source>
</evidence>
<evidence type="ECO:0000269" key="6">
    <source>
    </source>
</evidence>
<evidence type="ECO:0000269" key="7">
    <source>
    </source>
</evidence>
<evidence type="ECO:0000305" key="8"/>
<dbReference type="EMBL" id="AF393622">
    <property type="protein sequence ID" value="AAM33467.1"/>
    <property type="molecule type" value="mRNA"/>
</dbReference>
<dbReference type="SMR" id="Q8JJ48"/>
<dbReference type="IntAct" id="Q8JJ48">
    <property type="interactions" value="2"/>
</dbReference>
<dbReference type="AGR" id="Xenbase:XB-GENE-6251608"/>
<dbReference type="Xenbase" id="XB-GENE-6251608">
    <property type="gene designation" value="dact1.S"/>
</dbReference>
<dbReference type="Proteomes" id="UP000186698">
    <property type="component" value="Unplaced"/>
</dbReference>
<dbReference type="GO" id="GO:0005737">
    <property type="term" value="C:cytoplasm"/>
    <property type="evidence" value="ECO:0000318"/>
    <property type="project" value="GO_Central"/>
</dbReference>
<dbReference type="GO" id="GO:0005634">
    <property type="term" value="C:nucleus"/>
    <property type="evidence" value="ECO:0007669"/>
    <property type="project" value="UniProtKB-SubCell"/>
</dbReference>
<dbReference type="GO" id="GO:0090090">
    <property type="term" value="P:negative regulation of canonical Wnt signaling pathway"/>
    <property type="evidence" value="ECO:0000318"/>
    <property type="project" value="GO_Central"/>
</dbReference>
<dbReference type="GO" id="GO:0046329">
    <property type="term" value="P:negative regulation of JNK cascade"/>
    <property type="evidence" value="ECO:0000318"/>
    <property type="project" value="GO_Central"/>
</dbReference>
<dbReference type="GO" id="GO:0000122">
    <property type="term" value="P:negative regulation of transcription by RNA polymerase II"/>
    <property type="evidence" value="ECO:0000314"/>
    <property type="project" value="UniProtKB"/>
</dbReference>
<dbReference type="GO" id="GO:0007399">
    <property type="term" value="P:nervous system development"/>
    <property type="evidence" value="ECO:0007669"/>
    <property type="project" value="UniProtKB-KW"/>
</dbReference>
<dbReference type="GO" id="GO:0010470">
    <property type="term" value="P:regulation of gastrulation"/>
    <property type="evidence" value="ECO:0000314"/>
    <property type="project" value="UniProtKB"/>
</dbReference>
<dbReference type="GO" id="GO:2000095">
    <property type="term" value="P:regulation of Wnt signaling pathway, planar cell polarity pathway"/>
    <property type="evidence" value="ECO:0000318"/>
    <property type="project" value="GO_Central"/>
</dbReference>
<dbReference type="GO" id="GO:0060071">
    <property type="term" value="P:Wnt signaling pathway, planar cell polarity pathway"/>
    <property type="evidence" value="ECO:0000314"/>
    <property type="project" value="UniProtKB"/>
</dbReference>
<dbReference type="InterPro" id="IPR024843">
    <property type="entry name" value="Dapper"/>
</dbReference>
<dbReference type="PANTHER" id="PTHR15919:SF12">
    <property type="entry name" value="DAPPER HOMOLOG 1"/>
    <property type="match status" value="1"/>
</dbReference>
<dbReference type="PANTHER" id="PTHR15919">
    <property type="entry name" value="DAPPER-RELATED"/>
    <property type="match status" value="1"/>
</dbReference>
<dbReference type="Pfam" id="PF15268">
    <property type="entry name" value="Dapper"/>
    <property type="match status" value="1"/>
</dbReference>
<name>DCT1A_XENLA</name>
<accession>Q8JJ48</accession>
<organism>
    <name type="scientific">Xenopus laevis</name>
    <name type="common">African clawed frog</name>
    <dbReference type="NCBI Taxonomy" id="8355"/>
    <lineage>
        <taxon>Eukaryota</taxon>
        <taxon>Metazoa</taxon>
        <taxon>Chordata</taxon>
        <taxon>Craniata</taxon>
        <taxon>Vertebrata</taxon>
        <taxon>Euteleostomi</taxon>
        <taxon>Amphibia</taxon>
        <taxon>Batrachia</taxon>
        <taxon>Anura</taxon>
        <taxon>Pipoidea</taxon>
        <taxon>Pipidae</taxon>
        <taxon>Xenopodinae</taxon>
        <taxon>Xenopus</taxon>
        <taxon>Xenopus</taxon>
    </lineage>
</organism>
<keyword id="KW-0175">Coiled coil</keyword>
<keyword id="KW-0963">Cytoplasm</keyword>
<keyword id="KW-0217">Developmental protein</keyword>
<keyword id="KW-0524">Neurogenesis</keyword>
<keyword id="KW-0539">Nucleus</keyword>
<keyword id="KW-1185">Reference proteome</keyword>
<keyword id="KW-0879">Wnt signaling pathway</keyword>
<feature type="chain" id="PRO_0000191355" description="Dapper 1-A">
    <location>
        <begin position="1"/>
        <end position="818"/>
    </location>
</feature>
<feature type="region of interest" description="Interaction with tcf7l1-A">
    <location>
        <begin position="1"/>
        <end position="337"/>
    </location>
</feature>
<feature type="region of interest" description="Disordered" evidence="3">
    <location>
        <begin position="1"/>
        <end position="30"/>
    </location>
</feature>
<feature type="region of interest" description="Disordered" evidence="3">
    <location>
        <begin position="60"/>
        <end position="80"/>
    </location>
</feature>
<feature type="region of interest" description="Disordered" evidence="3">
    <location>
        <begin position="122"/>
        <end position="144"/>
    </location>
</feature>
<feature type="region of interest" description="Disordered" evidence="3">
    <location>
        <begin position="455"/>
        <end position="486"/>
    </location>
</feature>
<feature type="region of interest" description="Disordered" evidence="3">
    <location>
        <begin position="510"/>
        <end position="530"/>
    </location>
</feature>
<feature type="coiled-coil region" evidence="2">
    <location>
        <begin position="79"/>
        <end position="130"/>
    </location>
</feature>
<feature type="short sequence motif" description="PDZ-binding">
    <location>
        <begin position="815"/>
        <end position="818"/>
    </location>
</feature>
<feature type="compositionally biased region" description="Pro residues" evidence="3">
    <location>
        <begin position="1"/>
        <end position="10"/>
    </location>
</feature>
<feature type="compositionally biased region" description="Basic and acidic residues" evidence="3">
    <location>
        <begin position="21"/>
        <end position="30"/>
    </location>
</feature>
<feature type="compositionally biased region" description="Basic and acidic residues" evidence="3">
    <location>
        <begin position="122"/>
        <end position="132"/>
    </location>
</feature>
<feature type="compositionally biased region" description="Polar residues" evidence="3">
    <location>
        <begin position="455"/>
        <end position="485"/>
    </location>
</feature>
<feature type="compositionally biased region" description="Basic and acidic residues" evidence="3">
    <location>
        <begin position="512"/>
        <end position="524"/>
    </location>
</feature>
<feature type="mutagenesis site" description="Abrogates binding to dvl2." evidence="4">
    <location>
        <begin position="810"/>
        <end position="818"/>
    </location>
</feature>
<sequence length="818" mass="90360">MKPIPSPEPPGQLRLTPRRKDKGEAEWERHRTRERLEATLAGLAELDCLRHRQQLLVQNVLSPGTHGQDAAPTGDSPRSDEQKLLEENISLLKKQLNCLRKRDAGLLSQLHELDKQINDLKIDSEKTEETDSRPSSGFYELSDGTSGSLSNSSNSVFSECLSSCHSSTCFCNPLETSLNLTDGQAKSAEDFLEWLDYRESQHETGTVRCSFSAPHSNSVEVTADVHPKYQCDLVSKNGNDVYRYPSPLHAVAVQSPMFLISVMGNIKAEEPEEEIGPNDNDDCIVPELDHLKDEDSFLHQSSLCSLPLSSGKKMDGYILSIIHKKAHPVRTNKPRTSVNADPGKGILRHGSICVKQTVGVSQSNAVNLKNSKQTCLHSAGMISVDNSTYPSLKPCSKESLSEQLESKRMPSISTYPSCNVNELQSQNNSRNTVKSVCQGLARGSVAMTSNVQKENVTPNAPANLPNASSSVCNGSPRESTQNSALLPQEIKVVPPVKRVSLKNTLLSYHESSSFEERPPLDFKSEGSSSQSLDEGMLVNAHYIPAQQHGVKLHKNTKNVKIVKSSTLKHRADVQYVLENGSQTLKEKSKVVGKKCRFPEDLDTNKKVKKSTPRVKKIVHPHFEPAAVGRNPVAVRSGIKSHGHPKDVVLAKPKHKRSDYRRWKSSAEISYEEALRRARRRVQREMMGVCAQVPFSHASPYAYIASDSEYSAECESLFHSTVVDTSEDEQSNYTTNCFGDSESSLSEVEFVGESTTSSDTDESGGLIWSQFVHTLPMQATATAELQTTAKAFIKIKASHNLKKKILRFRSGSLKLMTTV</sequence>
<reference key="1">
    <citation type="journal article" date="2002" name="Nat. Cell Biol.">
        <title>Frodo interacts with Dishevelled to transduce Wnt signals.</title>
        <authorList>
            <person name="Gloy J."/>
            <person name="Hikasa H."/>
            <person name="Sokol S.Y."/>
        </authorList>
    </citation>
    <scope>NUCLEOTIDE SEQUENCE [MRNA]</scope>
    <scope>FUNCTION</scope>
    <scope>INTERACTION WITH DVL2</scope>
    <scope>TISSUE SPECIFICITY</scope>
    <scope>DEVELOPMENTAL STAGE</scope>
    <scope>MUTAGENESIS OF 810-GLY--VAL-818</scope>
    <source>
        <tissue>Gastrula</tissue>
    </source>
</reference>
<reference key="2">
    <citation type="journal article" date="2004" name="Development">
        <title>The involvement of Frodo in TCF-dependent signaling and neural tissue development.</title>
        <authorList>
            <person name="Hikasa H."/>
            <person name="Sokol S.Y."/>
        </authorList>
    </citation>
    <scope>FUNCTION</scope>
    <scope>INTERACTION WITH TCF7L1-A</scope>
</reference>
<reference key="3">
    <citation type="journal article" date="2005" name="Dev. Cell">
        <title>A vertebrate homolog of the cell cycle regulator Dbf4 is an inhibitor of Wnt signaling required for heart development.</title>
        <authorList>
            <person name="Brott B.K."/>
            <person name="Sokol S.Y."/>
        </authorList>
    </citation>
    <scope>FUNCTION</scope>
    <scope>INTERACTION WITH DBF4</scope>
</reference>
<reference key="4">
    <citation type="journal article" date="2006" name="Dev. Cell">
        <title>Frodo links Dishevelled to the p120-catenin/Kaiso pathway: distinct catenin subfamilies promote Wnt signals.</title>
        <authorList>
            <person name="Park J.I."/>
            <person name="Ji H."/>
            <person name="Jun S."/>
            <person name="Gu D."/>
            <person name="Hikasa H."/>
            <person name="Li L."/>
            <person name="Sokol S.Y."/>
            <person name="McCrea P.D."/>
        </authorList>
    </citation>
    <scope>FUNCTION</scope>
    <scope>INTERACTION WITH CTNND1</scope>
</reference>
<comment type="function">
    <text evidence="4 5 6 7">Involved in regulation of intracellular signaling pathways during development. Specifically thought to play a role in canonical and/or non-canonical Wnt signaling pathways through interaction with DSH (Dishevelled) family proteins. Binds to dvl2/dsh and impedes the degradation of beta-catenin (ctnnb1-A and possibly ctnnb1-B), thereby enhancing the transcriptional activation of target genes of the Wnt signaling pathway. Also promotes catenin delta/ctnnd1 stability which in turn promotes zbtb33/kaiso sequestration and thus is involved in the regulation of zbtb33/kaiso-mediated transcriptional repression. May also bind to and directly stimulate the transcriptional activity of tcf7l1-A. Required for eye development and neural patterning.</text>
</comment>
<comment type="subunit">
    <text evidence="4 5 6 7">Interacts with dbf4 and tcf7l1-A. Interacts with dvl2/dsh via the C-terminus.</text>
</comment>
<comment type="interaction">
    <interactant intactId="EBI-6259065">
        <id>Q8JJ48</id>
    </interactant>
    <interactant intactId="EBI-6260685">
        <id>Q8AXM9</id>
        <label>ctnnd1</label>
    </interactant>
    <organismsDiffer>false</organismsDiffer>
    <experiments>6</experiments>
</comment>
<comment type="interaction">
    <interactant intactId="EBI-6259065">
        <id>Q8JJ48</id>
    </interactant>
    <interactant intactId="EBI-6259044">
        <id>P70062</id>
        <label>tcf7l1-a</label>
    </interactant>
    <organismsDiffer>false</organismsDiffer>
    <experiments>3</experiments>
</comment>
<comment type="subcellular location">
    <subcellularLocation>
        <location evidence="1">Cytoplasm</location>
    </subcellularLocation>
    <subcellularLocation>
        <location evidence="1">Nucleus</location>
    </subcellularLocation>
</comment>
<comment type="tissue specificity">
    <text evidence="4">Expressed in the animal and dorsal marginal regions at late blastula and early gastrula stages. Expressed predominantly in the anterior neural plate at neurulation. Expressed mainly in the ectodermal placodes, including the eye anlagen and the otic vesicle, at later stages of development.</text>
</comment>
<comment type="developmental stage">
    <text evidence="4">Expressed both maternally and zygotically.</text>
</comment>
<comment type="domain">
    <text>The C-terminal PDZ-binding motif may mediate interaction with the PDZ domains of DSH (Dishevelled) family proteins.</text>
</comment>
<comment type="similarity">
    <text evidence="8">Belongs to the dapper family.</text>
</comment>
<gene>
    <name type="primary">dact1-a</name>
</gene>